<keyword id="KW-0963">Cytoplasm</keyword>
<keyword id="KW-0539">Nucleus</keyword>
<keyword id="KW-1185">Reference proteome</keyword>
<name>RTC4_KLULA</name>
<comment type="function">
    <text evidence="1">May be involved in a process influencing telomere capping.</text>
</comment>
<comment type="subcellular location">
    <subcellularLocation>
        <location evidence="1">Cytoplasm</location>
    </subcellularLocation>
    <subcellularLocation>
        <location evidence="1">Nucleus</location>
    </subcellularLocation>
</comment>
<comment type="similarity">
    <text evidence="3">Belongs to the RTC4 family.</text>
</comment>
<proteinExistence type="inferred from homology"/>
<accession>Q6CUR6</accession>
<protein>
    <recommendedName>
        <fullName>Restriction of telomere capping protein 4</fullName>
    </recommendedName>
</protein>
<evidence type="ECO:0000250" key="1"/>
<evidence type="ECO:0000256" key="2">
    <source>
        <dbReference type="SAM" id="MobiDB-lite"/>
    </source>
</evidence>
<evidence type="ECO:0000305" key="3"/>
<organism>
    <name type="scientific">Kluyveromyces lactis (strain ATCC 8585 / CBS 2359 / DSM 70799 / NBRC 1267 / NRRL Y-1140 / WM37)</name>
    <name type="common">Yeast</name>
    <name type="synonym">Candida sphaerica</name>
    <dbReference type="NCBI Taxonomy" id="284590"/>
    <lineage>
        <taxon>Eukaryota</taxon>
        <taxon>Fungi</taxon>
        <taxon>Dikarya</taxon>
        <taxon>Ascomycota</taxon>
        <taxon>Saccharomycotina</taxon>
        <taxon>Saccharomycetes</taxon>
        <taxon>Saccharomycetales</taxon>
        <taxon>Saccharomycetaceae</taxon>
        <taxon>Kluyveromyces</taxon>
    </lineage>
</organism>
<gene>
    <name type="primary">RTC4</name>
    <name type="ordered locus">KLLA0C02827g</name>
</gene>
<dbReference type="EMBL" id="CR382123">
    <property type="protein sequence ID" value="CAH01174.1"/>
    <property type="molecule type" value="Genomic_DNA"/>
</dbReference>
<dbReference type="RefSeq" id="XP_452323.1">
    <property type="nucleotide sequence ID" value="XM_452323.1"/>
</dbReference>
<dbReference type="FunCoup" id="Q6CUR6">
    <property type="interactions" value="32"/>
</dbReference>
<dbReference type="STRING" id="284590.Q6CUR6"/>
<dbReference type="PaxDb" id="284590-Q6CUR6"/>
<dbReference type="KEGG" id="kla:KLLA0_C02827g"/>
<dbReference type="eggNOG" id="ENOG502S1RG">
    <property type="taxonomic scope" value="Eukaryota"/>
</dbReference>
<dbReference type="HOGENOM" id="CLU_735798_0_0_1"/>
<dbReference type="InParanoid" id="Q6CUR6"/>
<dbReference type="Proteomes" id="UP000000598">
    <property type="component" value="Chromosome C"/>
</dbReference>
<dbReference type="GO" id="GO:0005737">
    <property type="term" value="C:cytoplasm"/>
    <property type="evidence" value="ECO:0007669"/>
    <property type="project" value="UniProtKB-SubCell"/>
</dbReference>
<dbReference type="GO" id="GO:0005634">
    <property type="term" value="C:nucleus"/>
    <property type="evidence" value="ECO:0007669"/>
    <property type="project" value="UniProtKB-SubCell"/>
</dbReference>
<dbReference type="InterPro" id="IPR039024">
    <property type="entry name" value="RTC4"/>
</dbReference>
<dbReference type="InterPro" id="IPR028094">
    <property type="entry name" value="RTC4_C"/>
</dbReference>
<dbReference type="PANTHER" id="PTHR41391">
    <property type="entry name" value="RESTRICTION OF TELOMERE CAPPING PROTEIN 4"/>
    <property type="match status" value="1"/>
</dbReference>
<dbReference type="PANTHER" id="PTHR41391:SF1">
    <property type="entry name" value="RESTRICTION OF TELOMERE CAPPING PROTEIN 4"/>
    <property type="match status" value="1"/>
</dbReference>
<dbReference type="Pfam" id="PF14474">
    <property type="entry name" value="RTC4"/>
    <property type="match status" value="1"/>
</dbReference>
<dbReference type="SMART" id="SM01312">
    <property type="entry name" value="RTC4"/>
    <property type="match status" value="1"/>
</dbReference>
<sequence>MVSSSNASSDQLSQESLVIISSSSHEGFSYGKRHPTVALNGSLNKKLRVRSGSLEELSDSEFDVSAKEEEKKSTELQDPKSIDLETQFSDVESDLDSLNERNKGADMLELTDDESVHELPGSSRDFFDENDVEEMSMELIKMYSIGLNAEGVSEFKKSSASLVLPKNTEKSTYLKSNAVRQKFMTKYDLPPVLFLDQLESRTREHISVCDAILTGKVSSLYYSMAKTVQKNSKRQVITNEELRDLNILKFTAGYFGSRRQAIVGMLILETYGEKLKRNKNPVISFWGPYDFSQYILAPEVLSYLCMDDFKLNNIEDAWDIMQTTIEFGTMVADLSPLEVYEIECEEESLRRLRLPQQYSSMSYRDDPRRKQDSNVG</sequence>
<feature type="chain" id="PRO_0000408796" description="Restriction of telomere capping protein 4">
    <location>
        <begin position="1"/>
        <end position="376"/>
    </location>
</feature>
<feature type="region of interest" description="Disordered" evidence="2">
    <location>
        <begin position="50"/>
        <end position="81"/>
    </location>
</feature>
<feature type="compositionally biased region" description="Basic and acidic residues" evidence="2">
    <location>
        <begin position="64"/>
        <end position="81"/>
    </location>
</feature>
<reference key="1">
    <citation type="journal article" date="2004" name="Nature">
        <title>Genome evolution in yeasts.</title>
        <authorList>
            <person name="Dujon B."/>
            <person name="Sherman D."/>
            <person name="Fischer G."/>
            <person name="Durrens P."/>
            <person name="Casaregola S."/>
            <person name="Lafontaine I."/>
            <person name="de Montigny J."/>
            <person name="Marck C."/>
            <person name="Neuveglise C."/>
            <person name="Talla E."/>
            <person name="Goffard N."/>
            <person name="Frangeul L."/>
            <person name="Aigle M."/>
            <person name="Anthouard V."/>
            <person name="Babour A."/>
            <person name="Barbe V."/>
            <person name="Barnay S."/>
            <person name="Blanchin S."/>
            <person name="Beckerich J.-M."/>
            <person name="Beyne E."/>
            <person name="Bleykasten C."/>
            <person name="Boisrame A."/>
            <person name="Boyer J."/>
            <person name="Cattolico L."/>
            <person name="Confanioleri F."/>
            <person name="de Daruvar A."/>
            <person name="Despons L."/>
            <person name="Fabre E."/>
            <person name="Fairhead C."/>
            <person name="Ferry-Dumazet H."/>
            <person name="Groppi A."/>
            <person name="Hantraye F."/>
            <person name="Hennequin C."/>
            <person name="Jauniaux N."/>
            <person name="Joyet P."/>
            <person name="Kachouri R."/>
            <person name="Kerrest A."/>
            <person name="Koszul R."/>
            <person name="Lemaire M."/>
            <person name="Lesur I."/>
            <person name="Ma L."/>
            <person name="Muller H."/>
            <person name="Nicaud J.-M."/>
            <person name="Nikolski M."/>
            <person name="Oztas S."/>
            <person name="Ozier-Kalogeropoulos O."/>
            <person name="Pellenz S."/>
            <person name="Potier S."/>
            <person name="Richard G.-F."/>
            <person name="Straub M.-L."/>
            <person name="Suleau A."/>
            <person name="Swennen D."/>
            <person name="Tekaia F."/>
            <person name="Wesolowski-Louvel M."/>
            <person name="Westhof E."/>
            <person name="Wirth B."/>
            <person name="Zeniou-Meyer M."/>
            <person name="Zivanovic Y."/>
            <person name="Bolotin-Fukuhara M."/>
            <person name="Thierry A."/>
            <person name="Bouchier C."/>
            <person name="Caudron B."/>
            <person name="Scarpelli C."/>
            <person name="Gaillardin C."/>
            <person name="Weissenbach J."/>
            <person name="Wincker P."/>
            <person name="Souciet J.-L."/>
        </authorList>
    </citation>
    <scope>NUCLEOTIDE SEQUENCE [LARGE SCALE GENOMIC DNA]</scope>
    <source>
        <strain>ATCC 8585 / CBS 2359 / DSM 70799 / NBRC 1267 / NRRL Y-1140 / WM37</strain>
    </source>
</reference>